<comment type="function">
    <text evidence="1">Catalyzes the NADPH-dependent reduction of glutamyl-tRNA(Glu) to glutamate 1-semialdehyde (GSA).</text>
</comment>
<comment type="catalytic activity">
    <reaction evidence="1">
        <text>(S)-4-amino-5-oxopentanoate + tRNA(Glu) + NADP(+) = L-glutamyl-tRNA(Glu) + NADPH + H(+)</text>
        <dbReference type="Rhea" id="RHEA:12344"/>
        <dbReference type="Rhea" id="RHEA-COMP:9663"/>
        <dbReference type="Rhea" id="RHEA-COMP:9680"/>
        <dbReference type="ChEBI" id="CHEBI:15378"/>
        <dbReference type="ChEBI" id="CHEBI:57501"/>
        <dbReference type="ChEBI" id="CHEBI:57783"/>
        <dbReference type="ChEBI" id="CHEBI:58349"/>
        <dbReference type="ChEBI" id="CHEBI:78442"/>
        <dbReference type="ChEBI" id="CHEBI:78520"/>
        <dbReference type="EC" id="1.2.1.70"/>
    </reaction>
</comment>
<comment type="pathway">
    <text evidence="1">Porphyrin-containing compound metabolism; protoporphyrin-IX biosynthesis; 5-aminolevulinate from L-glutamyl-tRNA(Glu): step 1/2.</text>
</comment>
<comment type="pathway">
    <text evidence="1">Porphyrin-containing compound metabolism; chlorophyll biosynthesis.</text>
</comment>
<comment type="subunit">
    <text evidence="1">Homodimer.</text>
</comment>
<comment type="domain">
    <text evidence="1">Possesses an unusual extended V-shaped dimeric structure with each monomer consisting of three distinct domains arranged along a curved 'spinal' alpha-helix. The N-terminal catalytic domain specifically recognizes the glutamate moiety of the substrate. The second domain is the NADPH-binding domain, and the third C-terminal domain is responsible for dimerization.</text>
</comment>
<comment type="miscellaneous">
    <text evidence="1">During catalysis, the active site Cys acts as a nucleophile attacking the alpha-carbonyl group of tRNA-bound glutamate with the formation of a thioester intermediate between enzyme and glutamate, and the concomitant release of tRNA(Glu). The thioester intermediate is finally reduced by direct hydride transfer from NADPH, to form the product GSA.</text>
</comment>
<comment type="similarity">
    <text evidence="1">Belongs to the glutamyl-tRNA reductase family.</text>
</comment>
<gene>
    <name evidence="1" type="primary">hemA</name>
    <name type="ordered locus">Plut_1426</name>
</gene>
<dbReference type="EC" id="1.2.1.70" evidence="1"/>
<dbReference type="EMBL" id="CP000096">
    <property type="protein sequence ID" value="ABB24285.1"/>
    <property type="molecule type" value="Genomic_DNA"/>
</dbReference>
<dbReference type="RefSeq" id="WP_011358157.1">
    <property type="nucleotide sequence ID" value="NC_007512.1"/>
</dbReference>
<dbReference type="SMR" id="Q3B2Z6"/>
<dbReference type="STRING" id="319225.Plut_1426"/>
<dbReference type="KEGG" id="plt:Plut_1426"/>
<dbReference type="eggNOG" id="COG0373">
    <property type="taxonomic scope" value="Bacteria"/>
</dbReference>
<dbReference type="HOGENOM" id="CLU_035113_2_2_10"/>
<dbReference type="OrthoDB" id="110209at2"/>
<dbReference type="UniPathway" id="UPA00251">
    <property type="reaction ID" value="UER00316"/>
</dbReference>
<dbReference type="UniPathway" id="UPA00668"/>
<dbReference type="Proteomes" id="UP000002709">
    <property type="component" value="Chromosome"/>
</dbReference>
<dbReference type="GO" id="GO:0008883">
    <property type="term" value="F:glutamyl-tRNA reductase activity"/>
    <property type="evidence" value="ECO:0007669"/>
    <property type="project" value="UniProtKB-UniRule"/>
</dbReference>
<dbReference type="GO" id="GO:0050661">
    <property type="term" value="F:NADP binding"/>
    <property type="evidence" value="ECO:0007669"/>
    <property type="project" value="InterPro"/>
</dbReference>
<dbReference type="GO" id="GO:0015995">
    <property type="term" value="P:chlorophyll biosynthetic process"/>
    <property type="evidence" value="ECO:0007669"/>
    <property type="project" value="UniProtKB-UniRule"/>
</dbReference>
<dbReference type="GO" id="GO:0019353">
    <property type="term" value="P:protoporphyrinogen IX biosynthetic process from glutamate"/>
    <property type="evidence" value="ECO:0007669"/>
    <property type="project" value="TreeGrafter"/>
</dbReference>
<dbReference type="CDD" id="cd05213">
    <property type="entry name" value="NAD_bind_Glutamyl_tRNA_reduct"/>
    <property type="match status" value="1"/>
</dbReference>
<dbReference type="FunFam" id="3.30.460.30:FF:000001">
    <property type="entry name" value="Glutamyl-tRNA reductase"/>
    <property type="match status" value="1"/>
</dbReference>
<dbReference type="FunFam" id="3.40.50.720:FF:000031">
    <property type="entry name" value="Glutamyl-tRNA reductase"/>
    <property type="match status" value="1"/>
</dbReference>
<dbReference type="Gene3D" id="3.30.460.30">
    <property type="entry name" value="Glutamyl-tRNA reductase, N-terminal domain"/>
    <property type="match status" value="1"/>
</dbReference>
<dbReference type="Gene3D" id="3.40.50.720">
    <property type="entry name" value="NAD(P)-binding Rossmann-like Domain"/>
    <property type="match status" value="1"/>
</dbReference>
<dbReference type="HAMAP" id="MF_00087">
    <property type="entry name" value="Glu_tRNA_reductase"/>
    <property type="match status" value="1"/>
</dbReference>
<dbReference type="InterPro" id="IPR000343">
    <property type="entry name" value="4pyrrol_synth_GluRdtase"/>
</dbReference>
<dbReference type="InterPro" id="IPR015896">
    <property type="entry name" value="4pyrrol_synth_GluRdtase_dimer"/>
</dbReference>
<dbReference type="InterPro" id="IPR015895">
    <property type="entry name" value="4pyrrol_synth_GluRdtase_N"/>
</dbReference>
<dbReference type="InterPro" id="IPR018214">
    <property type="entry name" value="GluRdtase_CS"/>
</dbReference>
<dbReference type="InterPro" id="IPR036453">
    <property type="entry name" value="GluRdtase_dimer_dom_sf"/>
</dbReference>
<dbReference type="InterPro" id="IPR036343">
    <property type="entry name" value="GluRdtase_N_sf"/>
</dbReference>
<dbReference type="InterPro" id="IPR036291">
    <property type="entry name" value="NAD(P)-bd_dom_sf"/>
</dbReference>
<dbReference type="InterPro" id="IPR006151">
    <property type="entry name" value="Shikm_DH/Glu-tRNA_Rdtase"/>
</dbReference>
<dbReference type="NCBIfam" id="TIGR01035">
    <property type="entry name" value="hemA"/>
    <property type="match status" value="1"/>
</dbReference>
<dbReference type="PANTHER" id="PTHR43013">
    <property type="entry name" value="GLUTAMYL-TRNA REDUCTASE"/>
    <property type="match status" value="1"/>
</dbReference>
<dbReference type="PANTHER" id="PTHR43013:SF1">
    <property type="entry name" value="GLUTAMYL-TRNA REDUCTASE"/>
    <property type="match status" value="1"/>
</dbReference>
<dbReference type="Pfam" id="PF00745">
    <property type="entry name" value="GlutR_dimer"/>
    <property type="match status" value="1"/>
</dbReference>
<dbReference type="Pfam" id="PF05201">
    <property type="entry name" value="GlutR_N"/>
    <property type="match status" value="1"/>
</dbReference>
<dbReference type="Pfam" id="PF01488">
    <property type="entry name" value="Shikimate_DH"/>
    <property type="match status" value="1"/>
</dbReference>
<dbReference type="PIRSF" id="PIRSF000445">
    <property type="entry name" value="4pyrrol_synth_GluRdtase"/>
    <property type="match status" value="1"/>
</dbReference>
<dbReference type="SUPFAM" id="SSF69742">
    <property type="entry name" value="Glutamyl tRNA-reductase catalytic, N-terminal domain"/>
    <property type="match status" value="1"/>
</dbReference>
<dbReference type="SUPFAM" id="SSF69075">
    <property type="entry name" value="Glutamyl tRNA-reductase dimerization domain"/>
    <property type="match status" value="1"/>
</dbReference>
<dbReference type="SUPFAM" id="SSF51735">
    <property type="entry name" value="NAD(P)-binding Rossmann-fold domains"/>
    <property type="match status" value="1"/>
</dbReference>
<dbReference type="PROSITE" id="PS00747">
    <property type="entry name" value="GLUTR"/>
    <property type="match status" value="1"/>
</dbReference>
<sequence length="425" mass="48247">MNIISVGVNHKTAPIEIRERISLSEVQNKEFITGLISGGLAHEAMVLSTCNRTELYVVPAMHEVTGEYLKDYIISFRDARKDVRPEHFFSRFYCGTARHLFEVSSAIDSLILGEGQILGQVKEAYRIAAEVQAAGILITRLCHTAFSVAKKVKTKTKIMEGAVSVSYAAVELAQKIFSNLSMKKILLVGAGETGELAAKHMFAKNARNIVITNRTQSKAEALAEELGTNRVLPFESYKEHLHEFDIIITAVSTKDYIITEADMHGAMQKRRLKPVIILDLGLPRNADPEIGKLQNMFLKDIDALKHIIDKNLERRSLELPKVHSIIDEELVAFGQWINTLKVRPTIVDLQSKFIEIKEKELERYRYKVSEEELRRMEHLTDRIMKKILHHPIKMLKAPISTSDNMPSRVDLVRNVFDLEEPNQSH</sequence>
<reference key="1">
    <citation type="submission" date="2005-08" db="EMBL/GenBank/DDBJ databases">
        <title>Complete sequence of Pelodictyon luteolum DSM 273.</title>
        <authorList>
            <consortium name="US DOE Joint Genome Institute"/>
            <person name="Copeland A."/>
            <person name="Lucas S."/>
            <person name="Lapidus A."/>
            <person name="Barry K."/>
            <person name="Detter J.C."/>
            <person name="Glavina T."/>
            <person name="Hammon N."/>
            <person name="Israni S."/>
            <person name="Pitluck S."/>
            <person name="Bryant D."/>
            <person name="Schmutz J."/>
            <person name="Larimer F."/>
            <person name="Land M."/>
            <person name="Kyrpides N."/>
            <person name="Ivanova N."/>
            <person name="Richardson P."/>
        </authorList>
    </citation>
    <scope>NUCLEOTIDE SEQUENCE [LARGE SCALE GENOMIC DNA]</scope>
    <source>
        <strain>DSM 273 / BCRC 81028 / 2530</strain>
    </source>
</reference>
<name>HEM1_CHLL3</name>
<feature type="chain" id="PRO_1000004659" description="Glutamyl-tRNA reductase">
    <location>
        <begin position="1"/>
        <end position="425"/>
    </location>
</feature>
<feature type="active site" description="Nucleophile" evidence="1">
    <location>
        <position position="50"/>
    </location>
</feature>
<feature type="binding site" evidence="1">
    <location>
        <begin position="49"/>
        <end position="52"/>
    </location>
    <ligand>
        <name>substrate</name>
    </ligand>
</feature>
<feature type="binding site" evidence="1">
    <location>
        <position position="109"/>
    </location>
    <ligand>
        <name>substrate</name>
    </ligand>
</feature>
<feature type="binding site" evidence="1">
    <location>
        <begin position="114"/>
        <end position="116"/>
    </location>
    <ligand>
        <name>substrate</name>
    </ligand>
</feature>
<feature type="binding site" evidence="1">
    <location>
        <position position="120"/>
    </location>
    <ligand>
        <name>substrate</name>
    </ligand>
</feature>
<feature type="binding site" evidence="1">
    <location>
        <begin position="189"/>
        <end position="194"/>
    </location>
    <ligand>
        <name>NADP(+)</name>
        <dbReference type="ChEBI" id="CHEBI:58349"/>
    </ligand>
</feature>
<feature type="site" description="Important for activity" evidence="1">
    <location>
        <position position="99"/>
    </location>
</feature>
<keyword id="KW-0149">Chlorophyll biosynthesis</keyword>
<keyword id="KW-0521">NADP</keyword>
<keyword id="KW-0560">Oxidoreductase</keyword>
<keyword id="KW-0627">Porphyrin biosynthesis</keyword>
<keyword id="KW-1185">Reference proteome</keyword>
<evidence type="ECO:0000255" key="1">
    <source>
        <dbReference type="HAMAP-Rule" id="MF_00087"/>
    </source>
</evidence>
<accession>Q3B2Z6</accession>
<protein>
    <recommendedName>
        <fullName evidence="1">Glutamyl-tRNA reductase</fullName>
        <shortName evidence="1">GluTR</shortName>
        <ecNumber evidence="1">1.2.1.70</ecNumber>
    </recommendedName>
</protein>
<organism>
    <name type="scientific">Chlorobium luteolum (strain DSM 273 / BCRC 81028 / 2530)</name>
    <name type="common">Pelodictyon luteolum</name>
    <dbReference type="NCBI Taxonomy" id="319225"/>
    <lineage>
        <taxon>Bacteria</taxon>
        <taxon>Pseudomonadati</taxon>
        <taxon>Chlorobiota</taxon>
        <taxon>Chlorobiia</taxon>
        <taxon>Chlorobiales</taxon>
        <taxon>Chlorobiaceae</taxon>
        <taxon>Chlorobium/Pelodictyon group</taxon>
        <taxon>Pelodictyon</taxon>
    </lineage>
</organism>
<proteinExistence type="inferred from homology"/>